<feature type="chain" id="PRO_0000256330" description="Chorismate synthase">
    <location>
        <begin position="1"/>
        <end position="366"/>
    </location>
</feature>
<feature type="binding site" evidence="1">
    <location>
        <position position="48"/>
    </location>
    <ligand>
        <name>NADP(+)</name>
        <dbReference type="ChEBI" id="CHEBI:58349"/>
    </ligand>
</feature>
<feature type="binding site" evidence="1">
    <location>
        <begin position="125"/>
        <end position="127"/>
    </location>
    <ligand>
        <name>FMN</name>
        <dbReference type="ChEBI" id="CHEBI:58210"/>
    </ligand>
</feature>
<feature type="binding site" evidence="1">
    <location>
        <begin position="241"/>
        <end position="242"/>
    </location>
    <ligand>
        <name>FMN</name>
        <dbReference type="ChEBI" id="CHEBI:58210"/>
    </ligand>
</feature>
<feature type="binding site" evidence="1">
    <location>
        <position position="285"/>
    </location>
    <ligand>
        <name>FMN</name>
        <dbReference type="ChEBI" id="CHEBI:58210"/>
    </ligand>
</feature>
<feature type="binding site" evidence="1">
    <location>
        <begin position="300"/>
        <end position="304"/>
    </location>
    <ligand>
        <name>FMN</name>
        <dbReference type="ChEBI" id="CHEBI:58210"/>
    </ligand>
</feature>
<feature type="binding site" evidence="1">
    <location>
        <position position="326"/>
    </location>
    <ligand>
        <name>FMN</name>
        <dbReference type="ChEBI" id="CHEBI:58210"/>
    </ligand>
</feature>
<comment type="function">
    <text evidence="1">Catalyzes the anti-1,4-elimination of the C-3 phosphate and the C-6 proR hydrogen from 5-enolpyruvylshikimate-3-phosphate (EPSP) to yield chorismate, which is the branch point compound that serves as the starting substrate for the three terminal pathways of aromatic amino acid biosynthesis. This reaction introduces a second double bond into the aromatic ring system.</text>
</comment>
<comment type="catalytic activity">
    <reaction evidence="1">
        <text>5-O-(1-carboxyvinyl)-3-phosphoshikimate = chorismate + phosphate</text>
        <dbReference type="Rhea" id="RHEA:21020"/>
        <dbReference type="ChEBI" id="CHEBI:29748"/>
        <dbReference type="ChEBI" id="CHEBI:43474"/>
        <dbReference type="ChEBI" id="CHEBI:57701"/>
        <dbReference type="EC" id="4.2.3.5"/>
    </reaction>
</comment>
<comment type="cofactor">
    <cofactor evidence="1">
        <name>FMNH2</name>
        <dbReference type="ChEBI" id="CHEBI:57618"/>
    </cofactor>
    <text evidence="1">Reduced FMN (FMNH(2)).</text>
</comment>
<comment type="pathway">
    <text evidence="1">Metabolic intermediate biosynthesis; chorismate biosynthesis; chorismate from D-erythrose 4-phosphate and phosphoenolpyruvate: step 7/7.</text>
</comment>
<comment type="subunit">
    <text evidence="1">Homotetramer.</text>
</comment>
<comment type="similarity">
    <text evidence="1">Belongs to the chorismate synthase family.</text>
</comment>
<evidence type="ECO:0000255" key="1">
    <source>
        <dbReference type="HAMAP-Rule" id="MF_00300"/>
    </source>
</evidence>
<reference key="1">
    <citation type="journal article" date="2007" name="J. Bacteriol.">
        <title>The complete genome sequence of Roseobacter denitrificans reveals a mixotrophic rather than photosynthetic metabolism.</title>
        <authorList>
            <person name="Swingley W.D."/>
            <person name="Sadekar S."/>
            <person name="Mastrian S.D."/>
            <person name="Matthies H.J."/>
            <person name="Hao J."/>
            <person name="Ramos H."/>
            <person name="Acharya C.R."/>
            <person name="Conrad A.L."/>
            <person name="Taylor H.L."/>
            <person name="Dejesa L.C."/>
            <person name="Shah M.K."/>
            <person name="O'Huallachain M.E."/>
            <person name="Lince M.T."/>
            <person name="Blankenship R.E."/>
            <person name="Beatty J.T."/>
            <person name="Touchman J.W."/>
        </authorList>
    </citation>
    <scope>NUCLEOTIDE SEQUENCE [LARGE SCALE GENOMIC DNA]</scope>
    <source>
        <strain>ATCC 33942 / OCh 114</strain>
    </source>
</reference>
<dbReference type="EC" id="4.2.3.5" evidence="1"/>
<dbReference type="EMBL" id="CP000362">
    <property type="protein sequence ID" value="ABG30261.1"/>
    <property type="molecule type" value="Genomic_DNA"/>
</dbReference>
<dbReference type="RefSeq" id="WP_011566883.1">
    <property type="nucleotide sequence ID" value="NC_008209.1"/>
</dbReference>
<dbReference type="SMR" id="Q16CN2"/>
<dbReference type="STRING" id="375451.RD1_0556"/>
<dbReference type="KEGG" id="rde:RD1_0556"/>
<dbReference type="eggNOG" id="COG0082">
    <property type="taxonomic scope" value="Bacteria"/>
</dbReference>
<dbReference type="HOGENOM" id="CLU_034547_0_0_5"/>
<dbReference type="OrthoDB" id="9771806at2"/>
<dbReference type="UniPathway" id="UPA00053">
    <property type="reaction ID" value="UER00090"/>
</dbReference>
<dbReference type="Proteomes" id="UP000007029">
    <property type="component" value="Chromosome"/>
</dbReference>
<dbReference type="GO" id="GO:0005829">
    <property type="term" value="C:cytosol"/>
    <property type="evidence" value="ECO:0007669"/>
    <property type="project" value="TreeGrafter"/>
</dbReference>
<dbReference type="GO" id="GO:0004107">
    <property type="term" value="F:chorismate synthase activity"/>
    <property type="evidence" value="ECO:0007669"/>
    <property type="project" value="UniProtKB-UniRule"/>
</dbReference>
<dbReference type="GO" id="GO:0010181">
    <property type="term" value="F:FMN binding"/>
    <property type="evidence" value="ECO:0007669"/>
    <property type="project" value="TreeGrafter"/>
</dbReference>
<dbReference type="GO" id="GO:0008652">
    <property type="term" value="P:amino acid biosynthetic process"/>
    <property type="evidence" value="ECO:0007669"/>
    <property type="project" value="UniProtKB-KW"/>
</dbReference>
<dbReference type="GO" id="GO:0009073">
    <property type="term" value="P:aromatic amino acid family biosynthetic process"/>
    <property type="evidence" value="ECO:0007669"/>
    <property type="project" value="UniProtKB-KW"/>
</dbReference>
<dbReference type="GO" id="GO:0009423">
    <property type="term" value="P:chorismate biosynthetic process"/>
    <property type="evidence" value="ECO:0007669"/>
    <property type="project" value="UniProtKB-UniRule"/>
</dbReference>
<dbReference type="CDD" id="cd07304">
    <property type="entry name" value="Chorismate_synthase"/>
    <property type="match status" value="1"/>
</dbReference>
<dbReference type="Gene3D" id="3.60.150.10">
    <property type="entry name" value="Chorismate synthase AroC"/>
    <property type="match status" value="1"/>
</dbReference>
<dbReference type="HAMAP" id="MF_00300">
    <property type="entry name" value="Chorismate_synth"/>
    <property type="match status" value="1"/>
</dbReference>
<dbReference type="InterPro" id="IPR000453">
    <property type="entry name" value="Chorismate_synth"/>
</dbReference>
<dbReference type="InterPro" id="IPR035904">
    <property type="entry name" value="Chorismate_synth_AroC_sf"/>
</dbReference>
<dbReference type="InterPro" id="IPR020541">
    <property type="entry name" value="Chorismate_synthase_CS"/>
</dbReference>
<dbReference type="NCBIfam" id="TIGR00033">
    <property type="entry name" value="aroC"/>
    <property type="match status" value="1"/>
</dbReference>
<dbReference type="NCBIfam" id="NF003793">
    <property type="entry name" value="PRK05382.1"/>
    <property type="match status" value="1"/>
</dbReference>
<dbReference type="PANTHER" id="PTHR21085">
    <property type="entry name" value="CHORISMATE SYNTHASE"/>
    <property type="match status" value="1"/>
</dbReference>
<dbReference type="PANTHER" id="PTHR21085:SF0">
    <property type="entry name" value="CHORISMATE SYNTHASE"/>
    <property type="match status" value="1"/>
</dbReference>
<dbReference type="Pfam" id="PF01264">
    <property type="entry name" value="Chorismate_synt"/>
    <property type="match status" value="1"/>
</dbReference>
<dbReference type="PIRSF" id="PIRSF001456">
    <property type="entry name" value="Chorismate_synth"/>
    <property type="match status" value="1"/>
</dbReference>
<dbReference type="SUPFAM" id="SSF103263">
    <property type="entry name" value="Chorismate synthase, AroC"/>
    <property type="match status" value="1"/>
</dbReference>
<dbReference type="PROSITE" id="PS00787">
    <property type="entry name" value="CHORISMATE_SYNTHASE_1"/>
    <property type="match status" value="1"/>
</dbReference>
<dbReference type="PROSITE" id="PS00789">
    <property type="entry name" value="CHORISMATE_SYNTHASE_3"/>
    <property type="match status" value="1"/>
</dbReference>
<proteinExistence type="inferred from homology"/>
<sequence>MSMNSFGHLFRVTTWGESHGTALGATVDGCPPGVAIDAGKIQHWLDKRKPGQNKYTTQRREADEVKILSGTFEGVTTGTPVQLMIENTDQRSKDYGDIKDKFRPGHADITYFQKYGVRDYRGGGRSSARETAARVAAGGLAREAIKSIAPGIDIKGYMTRMGAHEIDRSRFDWDQIDANPFWTPDAQAADEWASYLDGLRKSGSSVGAVIEVVARGVPAGLGAPIYAKLDTDLAAAMMSINAVKGVEIGEGMSAAMLTGELNADEISMGRDGPQYSSNHAGGILGGISTGQDIVVRFAVKPTSSILTTRKTITKSGEDTEIITKGRHDPCVGIRAVPVGEAMMACVLLDHLLLHRGQVGQNQGHIG</sequence>
<keyword id="KW-0028">Amino-acid biosynthesis</keyword>
<keyword id="KW-0057">Aromatic amino acid biosynthesis</keyword>
<keyword id="KW-0274">FAD</keyword>
<keyword id="KW-0285">Flavoprotein</keyword>
<keyword id="KW-0288">FMN</keyword>
<keyword id="KW-0456">Lyase</keyword>
<keyword id="KW-0521">NADP</keyword>
<keyword id="KW-1185">Reference proteome</keyword>
<name>AROC_ROSDO</name>
<accession>Q16CN2</accession>
<organism>
    <name type="scientific">Roseobacter denitrificans (strain ATCC 33942 / OCh 114)</name>
    <name type="common">Erythrobacter sp. (strain OCh 114)</name>
    <name type="synonym">Roseobacter denitrificans</name>
    <dbReference type="NCBI Taxonomy" id="375451"/>
    <lineage>
        <taxon>Bacteria</taxon>
        <taxon>Pseudomonadati</taxon>
        <taxon>Pseudomonadota</taxon>
        <taxon>Alphaproteobacteria</taxon>
        <taxon>Rhodobacterales</taxon>
        <taxon>Roseobacteraceae</taxon>
        <taxon>Roseobacter</taxon>
    </lineage>
</organism>
<gene>
    <name evidence="1" type="primary">aroC</name>
    <name type="ordered locus">RD1_0556</name>
</gene>
<protein>
    <recommendedName>
        <fullName evidence="1">Chorismate synthase</fullName>
        <shortName evidence="1">CS</shortName>
        <ecNumber evidence="1">4.2.3.5</ecNumber>
    </recommendedName>
    <alternativeName>
        <fullName evidence="1">5-enolpyruvylshikimate-3-phosphate phospholyase</fullName>
    </alternativeName>
</protein>